<gene>
    <name evidence="1" type="primary">mdh</name>
    <name type="ordered locus">SRU_1571</name>
</gene>
<keyword id="KW-0002">3D-structure</keyword>
<keyword id="KW-0520">NAD</keyword>
<keyword id="KW-0560">Oxidoreductase</keyword>
<keyword id="KW-1185">Reference proteome</keyword>
<keyword id="KW-0816">Tricarboxylic acid cycle</keyword>
<name>MDH_SALRD</name>
<sequence>MKVTVIGAGNVGATVAECVARQDVAKEVVMVDIKDGMPQGKALDMRESSPIHGFDTRVTGTNDYGPTEDSDVCIITAGLPRSPGMSRDDLLAKNTEIVGGVTEQFVEGSPDSTIIVVANPLDVMTYVAYEASGFPTNRVMGMAGVLDTGRFRSFIAEELDVSVRDVQALLMGGHGDTMVPLPRYTTVGGIPVPQLIDDARIEEIVERTKGAGGEIVDLMGTSAWYAPGAAAAEMTEAILKDNKRILPCAAYCDGEYGLDDLFIGVPVKLGAGGVEEVIEVDLDADEKAQLKTSAGHVHSNLDDLQRLRDEGKIG</sequence>
<feature type="chain" id="PRO_0000241967" description="Malate dehydrogenase">
    <location>
        <begin position="1"/>
        <end position="314"/>
    </location>
</feature>
<feature type="active site" description="Proton acceptor" evidence="1">
    <location>
        <position position="174"/>
    </location>
</feature>
<feature type="binding site" evidence="1">
    <location>
        <begin position="7"/>
        <end position="12"/>
    </location>
    <ligand>
        <name>NAD(+)</name>
        <dbReference type="ChEBI" id="CHEBI:57540"/>
    </ligand>
</feature>
<feature type="binding site" evidence="1">
    <location>
        <position position="32"/>
    </location>
    <ligand>
        <name>NAD(+)</name>
        <dbReference type="ChEBI" id="CHEBI:57540"/>
    </ligand>
</feature>
<feature type="binding site" evidence="1">
    <location>
        <position position="81"/>
    </location>
    <ligand>
        <name>substrate</name>
    </ligand>
</feature>
<feature type="binding site" evidence="1">
    <location>
        <position position="87"/>
    </location>
    <ligand>
        <name>substrate</name>
    </ligand>
</feature>
<feature type="binding site" evidence="1">
    <location>
        <position position="94"/>
    </location>
    <ligand>
        <name>NAD(+)</name>
        <dbReference type="ChEBI" id="CHEBI:57540"/>
    </ligand>
</feature>
<feature type="binding site" evidence="1">
    <location>
        <begin position="117"/>
        <end position="119"/>
    </location>
    <ligand>
        <name>NAD(+)</name>
        <dbReference type="ChEBI" id="CHEBI:57540"/>
    </ligand>
</feature>
<feature type="binding site" evidence="1">
    <location>
        <position position="119"/>
    </location>
    <ligand>
        <name>substrate</name>
    </ligand>
</feature>
<feature type="binding site" evidence="1">
    <location>
        <position position="150"/>
    </location>
    <ligand>
        <name>substrate</name>
    </ligand>
</feature>
<feature type="strand" evidence="2">
    <location>
        <begin position="2"/>
        <end position="6"/>
    </location>
</feature>
<feature type="helix" evidence="2">
    <location>
        <begin position="10"/>
        <end position="22"/>
    </location>
</feature>
<feature type="strand" evidence="2">
    <location>
        <begin position="25"/>
        <end position="31"/>
    </location>
</feature>
<feature type="helix" evidence="2">
    <location>
        <begin position="37"/>
        <end position="52"/>
    </location>
</feature>
<feature type="strand" evidence="2">
    <location>
        <begin position="57"/>
        <end position="64"/>
    </location>
</feature>
<feature type="helix" evidence="2">
    <location>
        <begin position="65"/>
        <end position="67"/>
    </location>
</feature>
<feature type="strand" evidence="2">
    <location>
        <begin position="71"/>
        <end position="75"/>
    </location>
</feature>
<feature type="helix" evidence="2">
    <location>
        <begin position="88"/>
        <end position="106"/>
    </location>
</feature>
<feature type="strand" evidence="2">
    <location>
        <begin position="113"/>
        <end position="116"/>
    </location>
</feature>
<feature type="helix" evidence="2">
    <location>
        <begin position="121"/>
        <end position="132"/>
    </location>
</feature>
<feature type="helix" evidence="2">
    <location>
        <begin position="136"/>
        <end position="138"/>
    </location>
</feature>
<feature type="strand" evidence="2">
    <location>
        <begin position="139"/>
        <end position="141"/>
    </location>
</feature>
<feature type="helix" evidence="2">
    <location>
        <begin position="144"/>
        <end position="159"/>
    </location>
</feature>
<feature type="helix" evidence="2">
    <location>
        <begin position="163"/>
        <end position="165"/>
    </location>
</feature>
<feature type="strand" evidence="2">
    <location>
        <begin position="166"/>
        <end position="174"/>
    </location>
</feature>
<feature type="helix" evidence="2">
    <location>
        <begin position="175"/>
        <end position="177"/>
    </location>
</feature>
<feature type="strand" evidence="2">
    <location>
        <begin position="178"/>
        <end position="187"/>
    </location>
</feature>
<feature type="helix" evidence="2">
    <location>
        <begin position="192"/>
        <end position="194"/>
    </location>
</feature>
<feature type="helix" evidence="2">
    <location>
        <begin position="198"/>
        <end position="209"/>
    </location>
</feature>
<feature type="helix" evidence="2">
    <location>
        <begin position="211"/>
        <end position="219"/>
    </location>
</feature>
<feature type="helix" evidence="2">
    <location>
        <begin position="225"/>
        <end position="240"/>
    </location>
</feature>
<feature type="strand" evidence="2">
    <location>
        <begin position="244"/>
        <end position="254"/>
    </location>
</feature>
<feature type="helix" evidence="2">
    <location>
        <begin position="255"/>
        <end position="257"/>
    </location>
</feature>
<feature type="strand" evidence="2">
    <location>
        <begin position="259"/>
        <end position="270"/>
    </location>
</feature>
<feature type="strand" evidence="2">
    <location>
        <begin position="273"/>
        <end position="277"/>
    </location>
</feature>
<feature type="helix" evidence="2">
    <location>
        <begin position="284"/>
        <end position="309"/>
    </location>
</feature>
<comment type="function">
    <text evidence="1">Catalyzes the reversible oxidation of malate to oxaloacetate.</text>
</comment>
<comment type="catalytic activity">
    <reaction evidence="1">
        <text>(S)-malate + NAD(+) = oxaloacetate + NADH + H(+)</text>
        <dbReference type="Rhea" id="RHEA:21432"/>
        <dbReference type="ChEBI" id="CHEBI:15378"/>
        <dbReference type="ChEBI" id="CHEBI:15589"/>
        <dbReference type="ChEBI" id="CHEBI:16452"/>
        <dbReference type="ChEBI" id="CHEBI:57540"/>
        <dbReference type="ChEBI" id="CHEBI:57945"/>
        <dbReference type="EC" id="1.1.1.37"/>
    </reaction>
</comment>
<comment type="similarity">
    <text evidence="1">Belongs to the LDH/MDH superfamily. MDH type 3 family.</text>
</comment>
<dbReference type="EC" id="1.1.1.37" evidence="1"/>
<dbReference type="EMBL" id="CP000159">
    <property type="protein sequence ID" value="ABC45135.1"/>
    <property type="molecule type" value="Genomic_DNA"/>
</dbReference>
<dbReference type="RefSeq" id="WP_011404318.1">
    <property type="nucleotide sequence ID" value="NC_007677.1"/>
</dbReference>
<dbReference type="RefSeq" id="YP_445692.1">
    <property type="nucleotide sequence ID" value="NC_007677.1"/>
</dbReference>
<dbReference type="PDB" id="3NEP">
    <property type="method" value="X-ray"/>
    <property type="resolution" value="1.55 A"/>
    <property type="chains" value="X=1-314"/>
</dbReference>
<dbReference type="PDBsum" id="3NEP"/>
<dbReference type="SMR" id="Q2S289"/>
<dbReference type="STRING" id="309807.SRU_1571"/>
<dbReference type="EnsemblBacteria" id="ABC45135">
    <property type="protein sequence ID" value="ABC45135"/>
    <property type="gene ID" value="SRU_1571"/>
</dbReference>
<dbReference type="GeneID" id="83728483"/>
<dbReference type="KEGG" id="sru:SRU_1571"/>
<dbReference type="PATRIC" id="fig|309807.25.peg.1625"/>
<dbReference type="eggNOG" id="COG0039">
    <property type="taxonomic scope" value="Bacteria"/>
</dbReference>
<dbReference type="HOGENOM" id="CLU_045401_2_1_10"/>
<dbReference type="OrthoDB" id="9802969at2"/>
<dbReference type="EvolutionaryTrace" id="Q2S289"/>
<dbReference type="Proteomes" id="UP000008674">
    <property type="component" value="Chromosome"/>
</dbReference>
<dbReference type="GO" id="GO:0004459">
    <property type="term" value="F:L-lactate dehydrogenase activity"/>
    <property type="evidence" value="ECO:0007669"/>
    <property type="project" value="TreeGrafter"/>
</dbReference>
<dbReference type="GO" id="GO:0030060">
    <property type="term" value="F:L-malate dehydrogenase (NAD+) activity"/>
    <property type="evidence" value="ECO:0007669"/>
    <property type="project" value="UniProtKB-UniRule"/>
</dbReference>
<dbReference type="GO" id="GO:0006089">
    <property type="term" value="P:lactate metabolic process"/>
    <property type="evidence" value="ECO:0007669"/>
    <property type="project" value="TreeGrafter"/>
</dbReference>
<dbReference type="GO" id="GO:0006099">
    <property type="term" value="P:tricarboxylic acid cycle"/>
    <property type="evidence" value="ECO:0007669"/>
    <property type="project" value="UniProtKB-UniRule"/>
</dbReference>
<dbReference type="CDD" id="cd01339">
    <property type="entry name" value="LDH-like_MDH"/>
    <property type="match status" value="1"/>
</dbReference>
<dbReference type="FunFam" id="3.40.50.720:FF:000018">
    <property type="entry name" value="Malate dehydrogenase"/>
    <property type="match status" value="1"/>
</dbReference>
<dbReference type="FunFam" id="3.90.110.10:FF:000004">
    <property type="entry name" value="Malate dehydrogenase"/>
    <property type="match status" value="1"/>
</dbReference>
<dbReference type="Gene3D" id="3.90.110.10">
    <property type="entry name" value="Lactate dehydrogenase/glycoside hydrolase, family 4, C-terminal"/>
    <property type="match status" value="1"/>
</dbReference>
<dbReference type="Gene3D" id="3.40.50.720">
    <property type="entry name" value="NAD(P)-binding Rossmann-like Domain"/>
    <property type="match status" value="1"/>
</dbReference>
<dbReference type="HAMAP" id="MF_00487">
    <property type="entry name" value="Malate_dehydrog_3"/>
    <property type="match status" value="1"/>
</dbReference>
<dbReference type="InterPro" id="IPR001557">
    <property type="entry name" value="L-lactate/malate_DH"/>
</dbReference>
<dbReference type="InterPro" id="IPR022383">
    <property type="entry name" value="Lactate/malate_DH_C"/>
</dbReference>
<dbReference type="InterPro" id="IPR001236">
    <property type="entry name" value="Lactate/malate_DH_N"/>
</dbReference>
<dbReference type="InterPro" id="IPR015955">
    <property type="entry name" value="Lactate_DH/Glyco_Ohase_4_C"/>
</dbReference>
<dbReference type="InterPro" id="IPR011275">
    <property type="entry name" value="Malate_DH_type3"/>
</dbReference>
<dbReference type="InterPro" id="IPR036291">
    <property type="entry name" value="NAD(P)-bd_dom_sf"/>
</dbReference>
<dbReference type="NCBIfam" id="TIGR01763">
    <property type="entry name" value="MalateDH_bact"/>
    <property type="match status" value="1"/>
</dbReference>
<dbReference type="NCBIfam" id="NF004863">
    <property type="entry name" value="PRK06223.1"/>
    <property type="match status" value="1"/>
</dbReference>
<dbReference type="PANTHER" id="PTHR43128">
    <property type="entry name" value="L-2-HYDROXYCARBOXYLATE DEHYDROGENASE (NAD(P)(+))"/>
    <property type="match status" value="1"/>
</dbReference>
<dbReference type="PANTHER" id="PTHR43128:SF16">
    <property type="entry name" value="L-LACTATE DEHYDROGENASE"/>
    <property type="match status" value="1"/>
</dbReference>
<dbReference type="Pfam" id="PF02866">
    <property type="entry name" value="Ldh_1_C"/>
    <property type="match status" value="1"/>
</dbReference>
<dbReference type="Pfam" id="PF00056">
    <property type="entry name" value="Ldh_1_N"/>
    <property type="match status" value="1"/>
</dbReference>
<dbReference type="PIRSF" id="PIRSF000102">
    <property type="entry name" value="Lac_mal_DH"/>
    <property type="match status" value="1"/>
</dbReference>
<dbReference type="PRINTS" id="PR00086">
    <property type="entry name" value="LLDHDRGNASE"/>
</dbReference>
<dbReference type="SUPFAM" id="SSF56327">
    <property type="entry name" value="LDH C-terminal domain-like"/>
    <property type="match status" value="1"/>
</dbReference>
<dbReference type="SUPFAM" id="SSF51735">
    <property type="entry name" value="NAD(P)-binding Rossmann-fold domains"/>
    <property type="match status" value="1"/>
</dbReference>
<evidence type="ECO:0000255" key="1">
    <source>
        <dbReference type="HAMAP-Rule" id="MF_00487"/>
    </source>
</evidence>
<evidence type="ECO:0007829" key="2">
    <source>
        <dbReference type="PDB" id="3NEP"/>
    </source>
</evidence>
<proteinExistence type="evidence at protein level"/>
<reference key="1">
    <citation type="journal article" date="2005" name="Proc. Natl. Acad. Sci. U.S.A.">
        <title>The genome of Salinibacter ruber: convergence and gene exchange among hyperhalophilic bacteria and archaea.</title>
        <authorList>
            <person name="Mongodin E.F."/>
            <person name="Nelson K.E."/>
            <person name="Daugherty S."/>
            <person name="DeBoy R.T."/>
            <person name="Wister J."/>
            <person name="Khouri H."/>
            <person name="Weidman J."/>
            <person name="Walsh D.A."/>
            <person name="Papke R.T."/>
            <person name="Sanchez Perez G."/>
            <person name="Sharma A.K."/>
            <person name="Nesbo C.L."/>
            <person name="MacLeod D."/>
            <person name="Bapteste E."/>
            <person name="Doolittle W.F."/>
            <person name="Charlebois R.L."/>
            <person name="Legault B."/>
            <person name="Rodriguez-Valera F."/>
        </authorList>
    </citation>
    <scope>NUCLEOTIDE SEQUENCE [LARGE SCALE GENOMIC DNA]</scope>
    <source>
        <strain>DSM 13855 / CECT 5946 / M31</strain>
    </source>
</reference>
<accession>Q2S289</accession>
<organism>
    <name type="scientific">Salinibacter ruber (strain DSM 13855 / M31)</name>
    <dbReference type="NCBI Taxonomy" id="309807"/>
    <lineage>
        <taxon>Bacteria</taxon>
        <taxon>Pseudomonadati</taxon>
        <taxon>Rhodothermota</taxon>
        <taxon>Rhodothermia</taxon>
        <taxon>Rhodothermales</taxon>
        <taxon>Salinibacteraceae</taxon>
        <taxon>Salinibacter</taxon>
    </lineage>
</organism>
<protein>
    <recommendedName>
        <fullName evidence="1">Malate dehydrogenase</fullName>
        <ecNumber evidence="1">1.1.1.37</ecNumber>
    </recommendedName>
</protein>